<keyword id="KW-0025">Alternative splicing</keyword>
<keyword id="KW-0966">Cell projection</keyword>
<keyword id="KW-1186">Ciliopathy</keyword>
<keyword id="KW-0970">Cilium biogenesis/degradation</keyword>
<keyword id="KW-0963">Cytoplasm</keyword>
<keyword id="KW-0206">Cytoskeleton</keyword>
<keyword id="KW-0225">Disease variant</keyword>
<keyword id="KW-0991">Intellectual disability</keyword>
<keyword id="KW-0597">Phosphoprotein</keyword>
<keyword id="KW-1267">Proteomics identification</keyword>
<keyword id="KW-1185">Reference proteome</keyword>
<keyword id="KW-0677">Repeat</keyword>
<feature type="chain" id="PRO_0000311239" description="C2 domain-containing protein 3">
    <location>
        <begin position="1"/>
        <end position="2353"/>
    </location>
</feature>
<feature type="domain" description="C2 1" evidence="3">
    <location>
        <begin position="521"/>
        <end position="678"/>
    </location>
</feature>
<feature type="domain" description="C2 2" evidence="3">
    <location>
        <begin position="787"/>
        <end position="919"/>
    </location>
</feature>
<feature type="domain" description="C2 3" evidence="3">
    <location>
        <begin position="985"/>
        <end position="1147"/>
    </location>
</feature>
<feature type="domain" description="C2 4" evidence="3">
    <location>
        <begin position="1171"/>
        <end position="1339"/>
    </location>
</feature>
<feature type="domain" description="C2 5" evidence="3">
    <location>
        <begin position="1403"/>
        <end position="1533"/>
    </location>
</feature>
<feature type="domain" description="C2 6" evidence="3">
    <location>
        <begin position="1617"/>
        <end position="1745"/>
    </location>
</feature>
<feature type="region of interest" description="Disordered" evidence="4">
    <location>
        <begin position="1"/>
        <end position="27"/>
    </location>
</feature>
<feature type="region of interest" description="Disordered" evidence="4">
    <location>
        <begin position="488"/>
        <end position="508"/>
    </location>
</feature>
<feature type="region of interest" description="Disordered" evidence="4">
    <location>
        <begin position="549"/>
        <end position="568"/>
    </location>
</feature>
<feature type="region of interest" description="Disordered" evidence="4">
    <location>
        <begin position="1569"/>
        <end position="1591"/>
    </location>
</feature>
<feature type="region of interest" description="Disordered" evidence="4">
    <location>
        <begin position="1822"/>
        <end position="1846"/>
    </location>
</feature>
<feature type="region of interest" description="Disordered" evidence="4">
    <location>
        <begin position="1972"/>
        <end position="2032"/>
    </location>
</feature>
<feature type="region of interest" description="Disordered" evidence="4">
    <location>
        <begin position="2084"/>
        <end position="2118"/>
    </location>
</feature>
<feature type="region of interest" description="Disordered" evidence="4">
    <location>
        <begin position="2130"/>
        <end position="2269"/>
    </location>
</feature>
<feature type="region of interest" description="Disordered" evidence="4">
    <location>
        <begin position="2301"/>
        <end position="2334"/>
    </location>
</feature>
<feature type="compositionally biased region" description="Basic residues" evidence="4">
    <location>
        <begin position="496"/>
        <end position="507"/>
    </location>
</feature>
<feature type="compositionally biased region" description="Polar residues" evidence="4">
    <location>
        <begin position="1830"/>
        <end position="1839"/>
    </location>
</feature>
<feature type="compositionally biased region" description="Basic and acidic residues" evidence="4">
    <location>
        <begin position="2007"/>
        <end position="2016"/>
    </location>
</feature>
<feature type="compositionally biased region" description="Polar residues" evidence="4">
    <location>
        <begin position="2084"/>
        <end position="2098"/>
    </location>
</feature>
<feature type="compositionally biased region" description="Polar residues" evidence="4">
    <location>
        <begin position="2181"/>
        <end position="2198"/>
    </location>
</feature>
<feature type="compositionally biased region" description="Basic and acidic residues" evidence="4">
    <location>
        <begin position="2236"/>
        <end position="2253"/>
    </location>
</feature>
<feature type="compositionally biased region" description="Polar residues" evidence="4">
    <location>
        <begin position="2254"/>
        <end position="2267"/>
    </location>
</feature>
<feature type="modified residue" description="Phosphoserine" evidence="2">
    <location>
        <position position="466"/>
    </location>
</feature>
<feature type="modified residue" description="Phosphoserine" evidence="18">
    <location>
        <position position="728"/>
    </location>
</feature>
<feature type="modified residue" description="Phosphoserine" evidence="18">
    <location>
        <position position="1891"/>
    </location>
</feature>
<feature type="modified residue" description="Phosphoserine" evidence="17 18">
    <location>
        <position position="2114"/>
    </location>
</feature>
<feature type="modified residue" description="Phosphoserine" evidence="18">
    <location>
        <position position="2132"/>
    </location>
</feature>
<feature type="splice variant" id="VSP_029444" description="In isoform 2." evidence="12">
    <location>
        <begin position="1364"/>
        <end position="1382"/>
    </location>
</feature>
<feature type="splice variant" id="VSP_029445" description="In isoform 2." evidence="12">
    <original>SILTSLRKNLSELDQIQRYFRQKLTKPF</original>
    <variation>PEAWRRGDCLMWYRGSWRASGFGKKKT</variation>
    <location>
        <begin position="1881"/>
        <end position="1908"/>
    </location>
</feature>
<feature type="splice variant" id="VSP_029446" description="In isoform 4." evidence="13">
    <original>KNLSELDQIQRYFRQKLTKPFLPLSPQTQTAISQ</original>
    <variation>SSPSLSYPSALRLKRPSHSTRRAVGTILGQVPAA</variation>
    <location>
        <begin position="1888"/>
        <end position="1921"/>
    </location>
</feature>
<feature type="splice variant" id="VSP_029447" description="In isoform 2." evidence="12">
    <location>
        <begin position="1909"/>
        <end position="2353"/>
    </location>
</feature>
<feature type="splice variant" id="VSP_034676" description="In isoform 4." evidence="13">
    <location>
        <begin position="1922"/>
        <end position="2353"/>
    </location>
</feature>
<feature type="splice variant" id="VSP_029448" description="In isoform 3." evidence="14">
    <original>DLQTITRD</original>
    <variation>LPAPNDS</variation>
    <location>
        <begin position="1961"/>
        <end position="1968"/>
    </location>
</feature>
<feature type="splice variant" id="VSP_034677" description="In isoform 1." evidence="12 13 15">
    <original>DLQ</original>
    <variation>GSY</variation>
    <location>
        <begin position="1961"/>
        <end position="1963"/>
    </location>
</feature>
<feature type="splice variant" id="VSP_034678" description="In isoform 1." evidence="12 13 15">
    <location>
        <begin position="1964"/>
        <end position="2353"/>
    </location>
</feature>
<feature type="splice variant" id="VSP_034679" description="In isoform 3." evidence="14">
    <location>
        <begin position="1969"/>
        <end position="2353"/>
    </location>
</feature>
<feature type="sequence variant" id="VAR_037181" description="In dbSNP:rs34050666.">
    <original>P</original>
    <variation>R</variation>
    <location>
        <position position="773"/>
    </location>
</feature>
<feature type="sequence variant" id="VAR_037182" description="In dbSNP:rs11235995." evidence="6">
    <original>R</original>
    <variation>Q</variation>
    <location>
        <position position="997"/>
    </location>
</feature>
<feature type="sequence variant" id="VAR_071196" description="In OFD14; dbSNP:rs587777654." evidence="9">
    <original>C</original>
    <variation>G</variation>
    <location>
        <position position="1029"/>
    </location>
</feature>
<feature type="sequence variant" id="VAR_037183" description="In dbSNP:rs826058." evidence="5 7 11">
    <original>R</original>
    <variation>Q</variation>
    <location>
        <position position="1219"/>
    </location>
</feature>
<feature type="sequence variant" id="VAR_037184" description="In dbSNP:rs1095423.">
    <original>Y</original>
    <variation>C</variation>
    <location>
        <position position="1297"/>
    </location>
</feature>
<feature type="sequence variant" id="VAR_037185" description="In dbSNP:rs12419308.">
    <original>S</original>
    <variation>N</variation>
    <location>
        <position position="1663"/>
    </location>
</feature>
<feature type="sequence variant" id="VAR_075697" description="In dbSNP:rs1064793399." evidence="10">
    <original>G</original>
    <variation>C</variation>
    <location>
        <position position="1743"/>
    </location>
</feature>
<feature type="sequence variant" id="VAR_037186" description="In dbSNP:rs1632245.">
    <original>G</original>
    <variation>W</variation>
    <location>
        <position position="1831"/>
    </location>
</feature>
<feature type="sequence variant" id="VAR_037187" description="In dbSNP:rs1632242.">
    <original>R</original>
    <variation>G</variation>
    <location>
        <position position="1832"/>
    </location>
</feature>
<feature type="sequence conflict" description="In Ref. 1; BAE17137." evidence="16" ref="1">
    <original>I</original>
    <variation>T</variation>
    <location>
        <position position="143"/>
    </location>
</feature>
<feature type="sequence conflict" description="In Ref. 1; BAE17137." evidence="16" ref="1">
    <original>M</original>
    <variation>V</variation>
    <location>
        <position position="740"/>
    </location>
</feature>
<feature type="sequence conflict" description="In Ref. 4; AAI10509." evidence="16" ref="4">
    <original>V</original>
    <variation>A</variation>
    <location>
        <position position="846"/>
    </location>
</feature>
<feature type="sequence conflict" description="In Ref. 1; BAE17137." evidence="16" ref="1">
    <original>T</original>
    <variation>A</variation>
    <location>
        <position position="1141"/>
    </location>
</feature>
<feature type="sequence conflict" description="In Ref. 1; BAE17137." evidence="16" ref="1">
    <original>H</original>
    <variation>R</variation>
    <location>
        <position position="1351"/>
    </location>
</feature>
<feature type="sequence conflict" description="In Ref. 1; BAE17137." evidence="16" ref="1">
    <original>P</original>
    <variation>S</variation>
    <location>
        <position position="1417"/>
    </location>
</feature>
<feature type="sequence conflict" description="In Ref. 1; BAC86334." evidence="16" ref="1">
    <original>Q</original>
    <variation>R</variation>
    <location>
        <position position="1625"/>
    </location>
</feature>
<feature type="sequence conflict" description="In Ref. 1; BAC86334." evidence="16" ref="1">
    <original>A</original>
    <variation>E</variation>
    <location>
        <position position="1777"/>
    </location>
</feature>
<accession>Q4AC94</accession>
<accession>C9JR55</accession>
<accession>E2QRD1</accession>
<accession>Q2NLE1</accession>
<accession>Q3C1U9</accession>
<accession>Q6ZU92</accession>
<accession>Q8IYM4</accession>
<accession>Q8NB87</accession>
<accession>Q8NDH7</accession>
<accession>Q9Y4M2</accession>
<evidence type="ECO:0000250" key="1"/>
<evidence type="ECO:0000250" key="2">
    <source>
        <dbReference type="UniProtKB" id="Q52KB6"/>
    </source>
</evidence>
<evidence type="ECO:0000255" key="3">
    <source>
        <dbReference type="PROSITE-ProRule" id="PRU00041"/>
    </source>
</evidence>
<evidence type="ECO:0000256" key="4">
    <source>
        <dbReference type="SAM" id="MobiDB-lite"/>
    </source>
</evidence>
<evidence type="ECO:0000269" key="5">
    <source>
    </source>
</evidence>
<evidence type="ECO:0000269" key="6">
    <source>
    </source>
</evidence>
<evidence type="ECO:0000269" key="7">
    <source>
    </source>
</evidence>
<evidence type="ECO:0000269" key="8">
    <source>
    </source>
</evidence>
<evidence type="ECO:0000269" key="9">
    <source>
    </source>
</evidence>
<evidence type="ECO:0000269" key="10">
    <source>
    </source>
</evidence>
<evidence type="ECO:0000269" key="11">
    <source ref="1"/>
</evidence>
<evidence type="ECO:0000303" key="12">
    <source>
    </source>
</evidence>
<evidence type="ECO:0000303" key="13">
    <source>
    </source>
</evidence>
<evidence type="ECO:0000303" key="14">
    <source>
    </source>
</evidence>
<evidence type="ECO:0000303" key="15">
    <source ref="1"/>
</evidence>
<evidence type="ECO:0000305" key="16"/>
<evidence type="ECO:0007744" key="17">
    <source>
    </source>
</evidence>
<evidence type="ECO:0007744" key="18">
    <source>
    </source>
</evidence>
<sequence length="2353" mass="260389">MKQRKGQGSGGSRGRKKRGLSDISPSTSLPPLVEGQLRCFLKLTVNRVIWKIAKPPTCVLVRVRWWGETSDGTLFCPRDALQTEPKAVRTTTRYAIRCGPKQFTSYLTDMAVLVLEVITKLDGLPIGRVQINGLAQLSPTHQINGFFTIVSSTSKKLGELQVSLALEPLSETYDSYHPLPTTDMTENVLLSKQGFRENTEPSSTQFQVPSRPRDIHTIKIDGKELAANSSRSTTPRGKDHVCFAENPDTIKDSSFGLQHSLNSGQSLESVTLKGRAPRKQMSLLNSSEFQPQIRTVAKSHSDSCILSSNNLPTKDLLSALLEQGNKLRNAMVISAMKSSPETSMLLDQVHPPINEDSLRASTQIRAFSRNRFKDHIEDHLLPSTENTFWRHDTKADTRAIQLLLGSAELSQGNFWDGLGSPPDSPSPGSDVYCISELNDPQYDQSLLENLFYTAPKSDTSISDFLSEEDDIVPSKKISQSTALARSSKVLESSDHKLKKRSAGKRNRNLVEQQMLSETPEDAQTMTLSVDRLALLGRTHSVRIIIETMGVPPDSPQMTPGKKSYAGPPPKVTTAKKRTFFVEYHFPVGFSESGLGKTALITEVVRLASSKITDGKVKFQQRFVFPVQFGGPMIEHWWNSNLTFQIYVKKTPQKKPEVIGSVSLSLRAVIQSELLSFSDQLPVQQENGQSPFGPLKVTMELITDNKDFTGINTKLSGNTHYTPLCAPTSPNKALPELNQDMTCTKNPQNLNQIHEETAKKAQNLVLPNRKSPSPVAPHPSTFVATPASHNLVNQTNGTTKESALLLHVLLMVPDGKDFISGESEKQSPCNVYLNCKLFSTEEVTRSVIAWGTTQPVFNFSQVIPVSLSSKYLERLKNNVMVIETWNKVRSPGQDKLLGLVKLPLHQFYMSFKDAKISRLLLDAQYPVVAVDSYMPVIDVFSGHQNGSLRVFLAMGSSNQIMALQRLKNEEGTLPPFSPRPAHFLDQPTAASVAMAEDRGNGLMEHCFEIHIEMVKGLAPLQATVWGEADCYVQYYFPVQHSQSSVLKGPEFLENGITLKPFRTATTLCVPDPIFNSEHHHSLLLPAEVPVQRLLLSAFSAQGLVPGGGVQFEIWCRYYYPNVRDQKVAKGTLPLSRICAMVTTQHREDVGIQTFNLPLTPRIENRKELRNQSSGLLDVGLRYRRSPRTAEGVLAARTVSISVQIIRACGLQAAAKALAEREPALQFSATVGVNASVTTHLSFLPQGEQRRTHPVACSFCPEFSHHVEFTCNLVTQHCSGEACFLAELLEFAEVIFAVYHENTKSASDIISIESCKEYLLGVVKVPTKELLIKRSGITGWYPIILPEDGGLPHGLELMQKIVGGLELSISFTHRGDRERVLEAAEHLGWSFENSLKDFVRMDEGEPATVTISTPRLWLPIHCVLLAGHNHIHKNTYCYLRYKFYDHEAFWTPLKKPKESVNKKQIMVTFKASKRAEVTRGPSLLWYFREERLEIQVWRAYGNDSVERPHQTDSWIGSAYVDLARLGERSARTLTVSGVYPLFGRNASNLSGAALRVHVVLSSLSSHLEPTHELDSMDCSSHSESEQLPRRNDEVQLSPPEVISCHQKSPASTQVPCSSTTAEVRLTQEGPADLDGTFAVSILVERAMHLSLKGSPLTERKVSIPSCCVSFATADESSPVYTQVVENTDSPIWNFQQQSRLSKELLLDPQQTLVFKVWHKGDEERVIGFASVDLSPLLSGFQFVCGWYNITDFSGECQGQIKVAVSPLESLIHFKEERQARRGVETSKSLIPIYSPFSFPASDTYAAFSSHMARQTLDQLAHASSKELDFSSPGRSDTTRSQASRHEEHVQNIRRFHESLHLQGEAPLPCDDKLTTSPLSSQTSILTSLRKNLSELDQIQRYFRQKLTKPFLPLSPQTQTAISQHQESCRDHLGPGASSLDPGSQCILEKSSNLVLQVSSLITDLQTITRDSQAALSSHRARSRSNKATTLPDAQDTEALQERCTMPDEPLVRAPDKGTDSPSPPPLEETSNGGRMLHESLRHAVPITRMQSSEDTEAGPAYSDEDYEEDIIEPRTLNEITTVTDKTSPWSSVISDTSEVISPQPDEVQREGPSCPSPGPFCREELMVKSSFLSSPERAVNPHLPRQGSPSQSLVACECEASKARVGGESASANPQPIPCPTLSGAQQSSTFVGWSSPQTDQNKEPKSEAPAENEAATSELGDSADSFKKLPLNLASQSRRENHKGPPIDSSDIRQRQVTTGSETSTKQSLLLPGPIVVPNFFLPPQQLEASLRMLSLSATLPPAATTDQDKSEATRGALSQRPCRPRPNSLPLNLPEEETLRIARIFSSQYSQKD</sequence>
<name>C2CD3_HUMAN</name>
<dbReference type="EMBL" id="AB231763">
    <property type="protein sequence ID" value="BAE46898.1"/>
    <property type="molecule type" value="mRNA"/>
</dbReference>
<dbReference type="EMBL" id="AB231764">
    <property type="protein sequence ID" value="BAE17137.1"/>
    <property type="molecule type" value="mRNA"/>
</dbReference>
<dbReference type="EMBL" id="AP000577">
    <property type="status" value="NOT_ANNOTATED_CDS"/>
    <property type="molecule type" value="Genomic_DNA"/>
</dbReference>
<dbReference type="EMBL" id="AP002392">
    <property type="status" value="NOT_ANNOTATED_CDS"/>
    <property type="molecule type" value="Genomic_DNA"/>
</dbReference>
<dbReference type="EMBL" id="AP003717">
    <property type="status" value="NOT_ANNOTATED_CDS"/>
    <property type="molecule type" value="Genomic_DNA"/>
</dbReference>
<dbReference type="EMBL" id="AK091397">
    <property type="protein sequence ID" value="BAC03654.1"/>
    <property type="status" value="ALT_INIT"/>
    <property type="molecule type" value="mRNA"/>
</dbReference>
<dbReference type="EMBL" id="AK125894">
    <property type="protein sequence ID" value="BAC86334.1"/>
    <property type="status" value="ALT_INIT"/>
    <property type="molecule type" value="mRNA"/>
</dbReference>
<dbReference type="EMBL" id="BC035599">
    <property type="protein sequence ID" value="AAH35599.1"/>
    <property type="molecule type" value="mRNA"/>
</dbReference>
<dbReference type="EMBL" id="BC110508">
    <property type="protein sequence ID" value="AAI10509.1"/>
    <property type="molecule type" value="mRNA"/>
</dbReference>
<dbReference type="EMBL" id="AL080220">
    <property type="protein sequence ID" value="CAB45779.1"/>
    <property type="molecule type" value="mRNA"/>
</dbReference>
<dbReference type="EMBL" id="AL833903">
    <property type="protein sequence ID" value="CAD38759.1"/>
    <property type="molecule type" value="mRNA"/>
</dbReference>
<dbReference type="CCDS" id="CCDS31636.1">
    <molecule id="Q4AC94-1"/>
</dbReference>
<dbReference type="CCDS" id="CCDS66167.1">
    <molecule id="Q4AC94-5"/>
</dbReference>
<dbReference type="PIR" id="T12555">
    <property type="entry name" value="T12555"/>
</dbReference>
<dbReference type="RefSeq" id="NP_001273506.1">
    <molecule id="Q4AC94-5"/>
    <property type="nucleotide sequence ID" value="NM_001286577.2"/>
</dbReference>
<dbReference type="RefSeq" id="NP_056346.3">
    <molecule id="Q4AC94-1"/>
    <property type="nucleotide sequence ID" value="NM_015531.6"/>
</dbReference>
<dbReference type="BioGRID" id="117480">
    <property type="interactions" value="40"/>
</dbReference>
<dbReference type="CORUM" id="Q4AC94"/>
<dbReference type="FunCoup" id="Q4AC94">
    <property type="interactions" value="1699"/>
</dbReference>
<dbReference type="IntAct" id="Q4AC94">
    <property type="interactions" value="29"/>
</dbReference>
<dbReference type="MINT" id="Q4AC94"/>
<dbReference type="STRING" id="9606.ENSP00000334379"/>
<dbReference type="GlyGen" id="Q4AC94">
    <property type="glycosylation" value="4 sites, 1 N-linked glycan (1 site), 1 O-linked glycan (3 sites)"/>
</dbReference>
<dbReference type="iPTMnet" id="Q4AC94"/>
<dbReference type="PhosphoSitePlus" id="Q4AC94"/>
<dbReference type="BioMuta" id="C2CD3"/>
<dbReference type="DMDM" id="313104297"/>
<dbReference type="jPOST" id="Q4AC94"/>
<dbReference type="MassIVE" id="Q4AC94"/>
<dbReference type="PaxDb" id="9606-ENSP00000334379"/>
<dbReference type="PeptideAtlas" id="Q4AC94"/>
<dbReference type="ProteomicsDB" id="62084">
    <molecule id="Q4AC94-5"/>
</dbReference>
<dbReference type="ProteomicsDB" id="62085">
    <molecule id="Q4AC94-1"/>
</dbReference>
<dbReference type="ProteomicsDB" id="62086">
    <molecule id="Q4AC94-2"/>
</dbReference>
<dbReference type="ProteomicsDB" id="62087">
    <molecule id="Q4AC94-3"/>
</dbReference>
<dbReference type="ProteomicsDB" id="62088">
    <molecule id="Q4AC94-4"/>
</dbReference>
<dbReference type="Pumba" id="Q4AC94"/>
<dbReference type="Antibodypedia" id="48039">
    <property type="antibodies" value="142 antibodies from 18 providers"/>
</dbReference>
<dbReference type="DNASU" id="26005"/>
<dbReference type="Ensembl" id="ENST00000313663.11">
    <molecule id="Q4AC94-1"/>
    <property type="protein sequence ID" value="ENSP00000323339.7"/>
    <property type="gene ID" value="ENSG00000168014.18"/>
</dbReference>
<dbReference type="Ensembl" id="ENST00000334126.12">
    <molecule id="Q4AC94-5"/>
    <property type="protein sequence ID" value="ENSP00000334379.7"/>
    <property type="gene ID" value="ENSG00000168014.18"/>
</dbReference>
<dbReference type="Ensembl" id="ENST00000442398.7">
    <molecule id="Q4AC94-4"/>
    <property type="protein sequence ID" value="ENSP00000404577.3"/>
    <property type="gene ID" value="ENSG00000168014.18"/>
</dbReference>
<dbReference type="GeneID" id="26005"/>
<dbReference type="KEGG" id="hsa:26005"/>
<dbReference type="MANE-Select" id="ENST00000334126.12">
    <property type="protein sequence ID" value="ENSP00000334379.7"/>
    <property type="RefSeq nucleotide sequence ID" value="NM_001286577.2"/>
    <property type="RefSeq protein sequence ID" value="NP_001273506.1"/>
</dbReference>
<dbReference type="UCSC" id="uc001ouu.4">
    <molecule id="Q4AC94-5"/>
    <property type="organism name" value="human"/>
</dbReference>
<dbReference type="AGR" id="HGNC:24564"/>
<dbReference type="CTD" id="26005"/>
<dbReference type="DisGeNET" id="26005"/>
<dbReference type="GeneCards" id="C2CD3"/>
<dbReference type="GeneReviews" id="C2CD3"/>
<dbReference type="HGNC" id="HGNC:24564">
    <property type="gene designation" value="C2CD3"/>
</dbReference>
<dbReference type="HPA" id="ENSG00000168014">
    <property type="expression patterns" value="Low tissue specificity"/>
</dbReference>
<dbReference type="MalaCards" id="C2CD3"/>
<dbReference type="MIM" id="615944">
    <property type="type" value="gene"/>
</dbReference>
<dbReference type="MIM" id="615948">
    <property type="type" value="phenotype"/>
</dbReference>
<dbReference type="neXtProt" id="NX_Q4AC94"/>
<dbReference type="OpenTargets" id="ENSG00000168014"/>
<dbReference type="Orphanet" id="434179">
    <property type="disease" value="Orofaciodigital syndrome type 14"/>
</dbReference>
<dbReference type="PharmGKB" id="PA162379082"/>
<dbReference type="VEuPathDB" id="HostDB:ENSG00000168014"/>
<dbReference type="eggNOG" id="ENOG502QRQ8">
    <property type="taxonomic scope" value="Eukaryota"/>
</dbReference>
<dbReference type="GeneTree" id="ENSGT00510000048072"/>
<dbReference type="HOGENOM" id="CLU_000804_0_0_1"/>
<dbReference type="InParanoid" id="Q4AC94"/>
<dbReference type="OMA" id="CYMPVVD"/>
<dbReference type="OrthoDB" id="79771at2759"/>
<dbReference type="PAN-GO" id="Q4AC94">
    <property type="GO annotations" value="4 GO annotations based on evolutionary models"/>
</dbReference>
<dbReference type="PhylomeDB" id="Q4AC94"/>
<dbReference type="TreeFam" id="TF323591"/>
<dbReference type="PathwayCommons" id="Q4AC94"/>
<dbReference type="Reactome" id="R-HSA-5620912">
    <property type="pathway name" value="Anchoring of the basal body to the plasma membrane"/>
</dbReference>
<dbReference type="SignaLink" id="Q4AC94"/>
<dbReference type="BioGRID-ORCS" id="26005">
    <property type="hits" value="14 hits in 1151 CRISPR screens"/>
</dbReference>
<dbReference type="CD-CODE" id="DEE660B4">
    <property type="entry name" value="Stress granule"/>
</dbReference>
<dbReference type="ChiTaRS" id="C2CD3">
    <property type="organism name" value="human"/>
</dbReference>
<dbReference type="GenomeRNAi" id="26005"/>
<dbReference type="Pharos" id="Q4AC94">
    <property type="development level" value="Tbio"/>
</dbReference>
<dbReference type="PRO" id="PR:Q4AC94"/>
<dbReference type="Proteomes" id="UP000005640">
    <property type="component" value="Chromosome 11"/>
</dbReference>
<dbReference type="RNAct" id="Q4AC94">
    <property type="molecule type" value="protein"/>
</dbReference>
<dbReference type="Bgee" id="ENSG00000168014">
    <property type="expression patterns" value="Expressed in sural nerve and 195 other cell types or tissues"/>
</dbReference>
<dbReference type="ExpressionAtlas" id="Q4AC94">
    <property type="expression patterns" value="baseline and differential"/>
</dbReference>
<dbReference type="GO" id="GO:0034451">
    <property type="term" value="C:centriolar satellite"/>
    <property type="evidence" value="ECO:0000314"/>
    <property type="project" value="UniProtKB"/>
</dbReference>
<dbReference type="GO" id="GO:0005814">
    <property type="term" value="C:centriole"/>
    <property type="evidence" value="ECO:0000314"/>
    <property type="project" value="UniProtKB"/>
</dbReference>
<dbReference type="GO" id="GO:0005813">
    <property type="term" value="C:centrosome"/>
    <property type="evidence" value="ECO:0000314"/>
    <property type="project" value="UniProtKB"/>
</dbReference>
<dbReference type="GO" id="GO:0036064">
    <property type="term" value="C:ciliary basal body"/>
    <property type="evidence" value="ECO:0007669"/>
    <property type="project" value="Ensembl"/>
</dbReference>
<dbReference type="GO" id="GO:0005829">
    <property type="term" value="C:cytosol"/>
    <property type="evidence" value="ECO:0000304"/>
    <property type="project" value="Reactome"/>
</dbReference>
<dbReference type="GO" id="GO:0005815">
    <property type="term" value="C:microtubule organizing center"/>
    <property type="evidence" value="ECO:0000318"/>
    <property type="project" value="GO_Central"/>
</dbReference>
<dbReference type="GO" id="GO:0007420">
    <property type="term" value="P:brain development"/>
    <property type="evidence" value="ECO:0007669"/>
    <property type="project" value="Ensembl"/>
</dbReference>
<dbReference type="GO" id="GO:0061511">
    <property type="term" value="P:centriole elongation"/>
    <property type="evidence" value="ECO:0000314"/>
    <property type="project" value="UniProtKB"/>
</dbReference>
<dbReference type="GO" id="GO:0060271">
    <property type="term" value="P:cilium assembly"/>
    <property type="evidence" value="ECO:0000318"/>
    <property type="project" value="GO_Central"/>
</dbReference>
<dbReference type="GO" id="GO:0042733">
    <property type="term" value="P:embryonic digit morphogenesis"/>
    <property type="evidence" value="ECO:0007669"/>
    <property type="project" value="Ensembl"/>
</dbReference>
<dbReference type="GO" id="GO:0001947">
    <property type="term" value="P:heart looping"/>
    <property type="evidence" value="ECO:0007669"/>
    <property type="project" value="Ensembl"/>
</dbReference>
<dbReference type="GO" id="GO:0001701">
    <property type="term" value="P:in utero embryonic development"/>
    <property type="evidence" value="ECO:0007669"/>
    <property type="project" value="Ensembl"/>
</dbReference>
<dbReference type="GO" id="GO:0021997">
    <property type="term" value="P:neural plate axis specification"/>
    <property type="evidence" value="ECO:0007669"/>
    <property type="project" value="Ensembl"/>
</dbReference>
<dbReference type="GO" id="GO:0021915">
    <property type="term" value="P:neural tube development"/>
    <property type="evidence" value="ECO:0007669"/>
    <property type="project" value="Ensembl"/>
</dbReference>
<dbReference type="GO" id="GO:1905515">
    <property type="term" value="P:non-motile cilium assembly"/>
    <property type="evidence" value="ECO:0000315"/>
    <property type="project" value="UniProtKB"/>
</dbReference>
<dbReference type="GO" id="GO:0071539">
    <property type="term" value="P:protein localization to centrosome"/>
    <property type="evidence" value="ECO:0000314"/>
    <property type="project" value="UniProtKB"/>
</dbReference>
<dbReference type="GO" id="GO:0016485">
    <property type="term" value="P:protein processing"/>
    <property type="evidence" value="ECO:0007669"/>
    <property type="project" value="Ensembl"/>
</dbReference>
<dbReference type="GO" id="GO:0030162">
    <property type="term" value="P:regulation of proteolysis"/>
    <property type="evidence" value="ECO:0007669"/>
    <property type="project" value="Ensembl"/>
</dbReference>
<dbReference type="GO" id="GO:0008589">
    <property type="term" value="P:regulation of smoothened signaling pathway"/>
    <property type="evidence" value="ECO:0007669"/>
    <property type="project" value="Ensembl"/>
</dbReference>
<dbReference type="CDD" id="cd00030">
    <property type="entry name" value="C2"/>
    <property type="match status" value="1"/>
</dbReference>
<dbReference type="CDD" id="cd08683">
    <property type="entry name" value="C2_C2cd3"/>
    <property type="match status" value="1"/>
</dbReference>
<dbReference type="FunFam" id="2.60.40.150:FF:000175">
    <property type="entry name" value="C2 calcium dependent domain containing 3"/>
    <property type="match status" value="1"/>
</dbReference>
<dbReference type="Gene3D" id="2.60.40.150">
    <property type="entry name" value="C2 domain"/>
    <property type="match status" value="1"/>
</dbReference>
<dbReference type="InterPro" id="IPR037775">
    <property type="entry name" value="C2_C2CD3"/>
</dbReference>
<dbReference type="InterPro" id="IPR000008">
    <property type="entry name" value="C2_dom"/>
</dbReference>
<dbReference type="InterPro" id="IPR035892">
    <property type="entry name" value="C2_domain_sf"/>
</dbReference>
<dbReference type="PANTHER" id="PTHR21254">
    <property type="entry name" value="C2 DOMAIN-CONTAINING PROTEIN 3"/>
    <property type="match status" value="1"/>
</dbReference>
<dbReference type="PANTHER" id="PTHR21254:SF1">
    <property type="entry name" value="C2 DOMAIN-CONTAINING PROTEIN 3"/>
    <property type="match status" value="1"/>
</dbReference>
<dbReference type="Pfam" id="PF00168">
    <property type="entry name" value="C2"/>
    <property type="match status" value="2"/>
</dbReference>
<dbReference type="Pfam" id="PF25339">
    <property type="entry name" value="C2_C2CD3_N"/>
    <property type="match status" value="1"/>
</dbReference>
<dbReference type="SMART" id="SM00239">
    <property type="entry name" value="C2"/>
    <property type="match status" value="5"/>
</dbReference>
<dbReference type="SUPFAM" id="SSF49562">
    <property type="entry name" value="C2 domain (Calcium/lipid-binding domain, CaLB)"/>
    <property type="match status" value="3"/>
</dbReference>
<dbReference type="PROSITE" id="PS50004">
    <property type="entry name" value="C2"/>
    <property type="match status" value="6"/>
</dbReference>
<reference key="1">
    <citation type="submission" date="2005-08" db="EMBL/GenBank/DDBJ databases">
        <title>Identification of novel human genes predicted by combining multiple gene-finders.</title>
        <authorList>
            <person name="Totoki Y."/>
            <person name="Yada T."/>
            <person name="Sakaki Y."/>
            <person name="Takeda T."/>
        </authorList>
    </citation>
    <scope>NUCLEOTIDE SEQUENCE [LARGE SCALE MRNA] (ISOFORM 1)</scope>
    <scope>VARIANT GLN-1219</scope>
</reference>
<reference key="2">
    <citation type="journal article" date="2006" name="Nature">
        <title>Human chromosome 11 DNA sequence and analysis including novel gene identification.</title>
        <authorList>
            <person name="Taylor T.D."/>
            <person name="Noguchi H."/>
            <person name="Totoki Y."/>
            <person name="Toyoda A."/>
            <person name="Kuroki Y."/>
            <person name="Dewar K."/>
            <person name="Lloyd C."/>
            <person name="Itoh T."/>
            <person name="Takeda T."/>
            <person name="Kim D.-W."/>
            <person name="She X."/>
            <person name="Barlow K.F."/>
            <person name="Bloom T."/>
            <person name="Bruford E."/>
            <person name="Chang J.L."/>
            <person name="Cuomo C.A."/>
            <person name="Eichler E."/>
            <person name="FitzGerald M.G."/>
            <person name="Jaffe D.B."/>
            <person name="LaButti K."/>
            <person name="Nicol R."/>
            <person name="Park H.-S."/>
            <person name="Seaman C."/>
            <person name="Sougnez C."/>
            <person name="Yang X."/>
            <person name="Zimmer A.R."/>
            <person name="Zody M.C."/>
            <person name="Birren B.W."/>
            <person name="Nusbaum C."/>
            <person name="Fujiyama A."/>
            <person name="Hattori M."/>
            <person name="Rogers J."/>
            <person name="Lander E.S."/>
            <person name="Sakaki Y."/>
        </authorList>
    </citation>
    <scope>NUCLEOTIDE SEQUENCE [LARGE SCALE GENOMIC DNA]</scope>
</reference>
<reference key="3">
    <citation type="journal article" date="2004" name="Nat. Genet.">
        <title>Complete sequencing and characterization of 21,243 full-length human cDNAs.</title>
        <authorList>
            <person name="Ota T."/>
            <person name="Suzuki Y."/>
            <person name="Nishikawa T."/>
            <person name="Otsuki T."/>
            <person name="Sugiyama T."/>
            <person name="Irie R."/>
            <person name="Wakamatsu A."/>
            <person name="Hayashi K."/>
            <person name="Sato H."/>
            <person name="Nagai K."/>
            <person name="Kimura K."/>
            <person name="Makita H."/>
            <person name="Sekine M."/>
            <person name="Obayashi M."/>
            <person name="Nishi T."/>
            <person name="Shibahara T."/>
            <person name="Tanaka T."/>
            <person name="Ishii S."/>
            <person name="Yamamoto J."/>
            <person name="Saito K."/>
            <person name="Kawai Y."/>
            <person name="Isono Y."/>
            <person name="Nakamura Y."/>
            <person name="Nagahari K."/>
            <person name="Murakami K."/>
            <person name="Yasuda T."/>
            <person name="Iwayanagi T."/>
            <person name="Wagatsuma M."/>
            <person name="Shiratori A."/>
            <person name="Sudo H."/>
            <person name="Hosoiri T."/>
            <person name="Kaku Y."/>
            <person name="Kodaira H."/>
            <person name="Kondo H."/>
            <person name="Sugawara M."/>
            <person name="Takahashi M."/>
            <person name="Kanda K."/>
            <person name="Yokoi T."/>
            <person name="Furuya T."/>
            <person name="Kikkawa E."/>
            <person name="Omura Y."/>
            <person name="Abe K."/>
            <person name="Kamihara K."/>
            <person name="Katsuta N."/>
            <person name="Sato K."/>
            <person name="Tanikawa M."/>
            <person name="Yamazaki M."/>
            <person name="Ninomiya K."/>
            <person name="Ishibashi T."/>
            <person name="Yamashita H."/>
            <person name="Murakawa K."/>
            <person name="Fujimori K."/>
            <person name="Tanai H."/>
            <person name="Kimata M."/>
            <person name="Watanabe M."/>
            <person name="Hiraoka S."/>
            <person name="Chiba Y."/>
            <person name="Ishida S."/>
            <person name="Ono Y."/>
            <person name="Takiguchi S."/>
            <person name="Watanabe S."/>
            <person name="Yosida M."/>
            <person name="Hotuta T."/>
            <person name="Kusano J."/>
            <person name="Kanehori K."/>
            <person name="Takahashi-Fujii A."/>
            <person name="Hara H."/>
            <person name="Tanase T.-O."/>
            <person name="Nomura Y."/>
            <person name="Togiya S."/>
            <person name="Komai F."/>
            <person name="Hara R."/>
            <person name="Takeuchi K."/>
            <person name="Arita M."/>
            <person name="Imose N."/>
            <person name="Musashino K."/>
            <person name="Yuuki H."/>
            <person name="Oshima A."/>
            <person name="Sasaki N."/>
            <person name="Aotsuka S."/>
            <person name="Yoshikawa Y."/>
            <person name="Matsunawa H."/>
            <person name="Ichihara T."/>
            <person name="Shiohata N."/>
            <person name="Sano S."/>
            <person name="Moriya S."/>
            <person name="Momiyama H."/>
            <person name="Satoh N."/>
            <person name="Takami S."/>
            <person name="Terashima Y."/>
            <person name="Suzuki O."/>
            <person name="Nakagawa S."/>
            <person name="Senoh A."/>
            <person name="Mizoguchi H."/>
            <person name="Goto Y."/>
            <person name="Shimizu F."/>
            <person name="Wakebe H."/>
            <person name="Hishigaki H."/>
            <person name="Watanabe T."/>
            <person name="Sugiyama A."/>
            <person name="Takemoto M."/>
            <person name="Kawakami B."/>
            <person name="Yamazaki M."/>
            <person name="Watanabe K."/>
            <person name="Kumagai A."/>
            <person name="Itakura S."/>
            <person name="Fukuzumi Y."/>
            <person name="Fujimori Y."/>
            <person name="Komiyama M."/>
            <person name="Tashiro H."/>
            <person name="Tanigami A."/>
            <person name="Fujiwara T."/>
            <person name="Ono T."/>
            <person name="Yamada K."/>
            <person name="Fujii Y."/>
            <person name="Ozaki K."/>
            <person name="Hirao M."/>
            <person name="Ohmori Y."/>
            <person name="Kawabata A."/>
            <person name="Hikiji T."/>
            <person name="Kobatake N."/>
            <person name="Inagaki H."/>
            <person name="Ikema Y."/>
            <person name="Okamoto S."/>
            <person name="Okitani R."/>
            <person name="Kawakami T."/>
            <person name="Noguchi S."/>
            <person name="Itoh T."/>
            <person name="Shigeta K."/>
            <person name="Senba T."/>
            <person name="Matsumura K."/>
            <person name="Nakajima Y."/>
            <person name="Mizuno T."/>
            <person name="Morinaga M."/>
            <person name="Sasaki M."/>
            <person name="Togashi T."/>
            <person name="Oyama M."/>
            <person name="Hata H."/>
            <person name="Watanabe M."/>
            <person name="Komatsu T."/>
            <person name="Mizushima-Sugano J."/>
            <person name="Satoh T."/>
            <person name="Shirai Y."/>
            <person name="Takahashi Y."/>
            <person name="Nakagawa K."/>
            <person name="Okumura K."/>
            <person name="Nagase T."/>
            <person name="Nomura N."/>
            <person name="Kikuchi H."/>
            <person name="Masuho Y."/>
            <person name="Yamashita R."/>
            <person name="Nakai K."/>
            <person name="Yada T."/>
            <person name="Nakamura Y."/>
            <person name="Ohara O."/>
            <person name="Isogai T."/>
            <person name="Sugano S."/>
        </authorList>
    </citation>
    <scope>NUCLEOTIDE SEQUENCE [LARGE SCALE MRNA] OF 705-2352 (ISOFORM 1)</scope>
    <scope>NUCLEOTIDE SEQUENCE [LARGE SCALE MRNA] OF 1067-2352 (ISOFORM 2)</scope>
    <scope>VARIANT GLN-1219</scope>
    <source>
        <tissue>Brain</tissue>
        <tissue>Testis</tissue>
    </source>
</reference>
<reference key="4">
    <citation type="journal article" date="2004" name="Genome Res.">
        <title>The status, quality, and expansion of the NIH full-length cDNA project: the Mammalian Gene Collection (MGC).</title>
        <authorList>
            <consortium name="The MGC Project Team"/>
        </authorList>
    </citation>
    <scope>NUCLEOTIDE SEQUENCE [LARGE SCALE MRNA] OF 716-2353 (ISOFORM 1)</scope>
    <scope>NUCLEOTIDE SEQUENCE [LARGE SCALE MRNA] OF 1245-2353 (ISOFORM 4)</scope>
    <scope>VARIANT GLN-997</scope>
    <source>
        <tissue>Eye</tissue>
    </source>
</reference>
<reference key="5">
    <citation type="journal article" date="2007" name="BMC Genomics">
        <title>The full-ORF clone resource of the German cDNA consortium.</title>
        <authorList>
            <person name="Bechtel S."/>
            <person name="Rosenfelder H."/>
            <person name="Duda A."/>
            <person name="Schmidt C.P."/>
            <person name="Ernst U."/>
            <person name="Wellenreuther R."/>
            <person name="Mehrle A."/>
            <person name="Schuster C."/>
            <person name="Bahr A."/>
            <person name="Bloecker H."/>
            <person name="Heubner D."/>
            <person name="Hoerlein A."/>
            <person name="Michel G."/>
            <person name="Wedler H."/>
            <person name="Koehrer K."/>
            <person name="Ottenwaelder B."/>
            <person name="Poustka A."/>
            <person name="Wiemann S."/>
            <person name="Schupp I."/>
        </authorList>
    </citation>
    <scope>NUCLEOTIDE SEQUENCE [LARGE SCALE MRNA] OF 1193-2353 (ISOFORM 3)</scope>
    <scope>NUCLEOTIDE SEQUENCE [LARGE SCALE MRNA] OF 1999-2353 (ISOFORM 5)</scope>
    <scope>VARIANT GLN-1219</scope>
    <source>
        <tissue>Testis</tissue>
    </source>
</reference>
<reference key="6">
    <citation type="journal article" date="2008" name="J. Proteome Res.">
        <title>Combining protein-based IMAC, peptide-based IMAC, and MudPIT for efficient phosphoproteomic analysis.</title>
        <authorList>
            <person name="Cantin G.T."/>
            <person name="Yi W."/>
            <person name="Lu B."/>
            <person name="Park S.K."/>
            <person name="Xu T."/>
            <person name="Lee J.-D."/>
            <person name="Yates J.R. III"/>
        </authorList>
    </citation>
    <scope>PHOSPHORYLATION [LARGE SCALE ANALYSIS] AT SER-2114</scope>
    <scope>IDENTIFICATION BY MASS SPECTROMETRY [LARGE SCALE ANALYSIS]</scope>
    <source>
        <tissue>Cervix carcinoma</tissue>
    </source>
</reference>
<reference key="7">
    <citation type="journal article" date="2013" name="Dev. Cell">
        <title>Discovering regulators of centriole biogenesis through siRNA-based functional genomics in human cells.</title>
        <authorList>
            <person name="Balestra F.R."/>
            <person name="Strnad P."/>
            <person name="Fluckiger I."/>
            <person name="Gonczy P."/>
        </authorList>
    </citation>
    <scope>FUNCTION</scope>
    <scope>SUBCELLULAR LOCATION</scope>
</reference>
<reference key="8">
    <citation type="journal article" date="2013" name="J. Proteome Res.">
        <title>Toward a comprehensive characterization of a human cancer cell phosphoproteome.</title>
        <authorList>
            <person name="Zhou H."/>
            <person name="Di Palma S."/>
            <person name="Preisinger C."/>
            <person name="Peng M."/>
            <person name="Polat A.N."/>
            <person name="Heck A.J."/>
            <person name="Mohammed S."/>
        </authorList>
    </citation>
    <scope>PHOSPHORYLATION [LARGE SCALE ANALYSIS] AT SER-728; SER-1891; SER-2114 AND SER-2132</scope>
    <scope>IDENTIFICATION BY MASS SPECTROMETRY [LARGE SCALE ANALYSIS]</scope>
    <source>
        <tissue>Cervix carcinoma</tissue>
        <tissue>Erythroleukemia</tissue>
    </source>
</reference>
<reference key="9">
    <citation type="journal article" date="2014" name="Nat. Genet.">
        <title>The oral-facial-digital syndrome gene C2CD3 encodes a positive regulator of centriole elongation.</title>
        <authorList>
            <person name="Thauvin-Robinet C."/>
            <person name="Lee J.S."/>
            <person name="Lopez E."/>
            <person name="Herranz-Perez V."/>
            <person name="Shida T."/>
            <person name="Franco B."/>
            <person name="Jego L."/>
            <person name="Ye F."/>
            <person name="Pasquier L."/>
            <person name="Loget P."/>
            <person name="Gigot N."/>
            <person name="Aral B."/>
            <person name="Lopes C.A."/>
            <person name="St-Onge J."/>
            <person name="Bruel A.L."/>
            <person name="Thevenon J."/>
            <person name="Gonzalez-Granero S."/>
            <person name="Alby C."/>
            <person name="Munnich A."/>
            <person name="Vekemans M."/>
            <person name="Huet F."/>
            <person name="Fry A.M."/>
            <person name="Saunier S."/>
            <person name="Riviere J.B."/>
            <person name="Attie-Bitach T."/>
            <person name="Garcia-Verdugo J.M."/>
            <person name="Faivre L."/>
            <person name="Megarbane A."/>
            <person name="Nachury M.V."/>
        </authorList>
    </citation>
    <scope>INVOLVEMENT IN OFD14</scope>
    <scope>VARIANT OFD14 GLY-1029</scope>
    <scope>FUNCTION</scope>
    <scope>SUBCELLULAR LOCATION</scope>
    <scope>INTERACTION WITH OFD1</scope>
</reference>
<reference key="10">
    <citation type="journal article" date="2015" name="Am. J. Hum. Genet.">
        <title>Joubert Syndrome in French Canadians and Identification of Mutations in CEP104.</title>
        <authorList>
            <consortium name="Care4Rare Canada Consortium"/>
            <person name="Srour M."/>
            <person name="Hamdan F.F."/>
            <person name="McKnight D."/>
            <person name="Davis E."/>
            <person name="Mandel H."/>
            <person name="Schwartzentruber J."/>
            <person name="Martin B."/>
            <person name="Patry L."/>
            <person name="Nassif C."/>
            <person name="Dionne-Laporte A."/>
            <person name="Ospina L.H."/>
            <person name="Lemyre E."/>
            <person name="Massicotte C."/>
            <person name="Laframboise R."/>
            <person name="Maranda B."/>
            <person name="Labuda D."/>
            <person name="Decarie J.C."/>
            <person name="Rypens F."/>
            <person name="Goldsher D."/>
            <person name="Fallet-Bianco C."/>
            <person name="Soucy J.F."/>
            <person name="Laberge A.M."/>
            <person name="Maftei C."/>
            <person name="Boycott K."/>
            <person name="Brais B."/>
            <person name="Boucher R.M."/>
            <person name="Rouleau G.A."/>
            <person name="Katsanis N."/>
            <person name="Majewski J."/>
            <person name="Elpeleg O."/>
            <person name="Kukolich M.K."/>
            <person name="Shalev S."/>
            <person name="Michaud J.L."/>
        </authorList>
    </citation>
    <scope>VARIANT CYS-1743</scope>
</reference>
<comment type="function">
    <text evidence="8 9">Component of the centrioles that acts as a positive regulator of centriole elongation (PubMed:24997988). Promotes assembly of centriolar distal appendage, a structure at the distal end of the mother centriole that acts as an anchor of the cilium, and is required for recruitment of centriolar distal appendages proteins CEP83, SCLT1, CEP89, FBF1 and CEP164. Not required for centriolar satellite integrity or RAB8 activation. Required for primary cilium formation (PubMed:23769972). Required for sonic hedgehog/SHH signaling and for proteolytic processing of GLI3.</text>
</comment>
<comment type="subunit">
    <text evidence="1 9">Interacts with IFT88, BBS4 and PCM1 (By similarity). Interacts with OFD1; OFD1 may act as a negative regulator of C2CD3. Associates with the BBSome complex.</text>
</comment>
<comment type="interaction">
    <interactant intactId="EBI-10897521">
        <id>Q4AC94</id>
    </interactant>
    <interactant intactId="EBI-716327">
        <id>O75665</id>
        <label>OFD1</label>
    </interactant>
    <organismsDiffer>false</organismsDiffer>
    <experiments>3</experiments>
</comment>
<comment type="subcellular location">
    <subcellularLocation>
        <location evidence="1">Cytoplasm</location>
        <location evidence="1">Cytoskeleton</location>
        <location evidence="1">Cilium basal body</location>
    </subcellularLocation>
    <subcellularLocation>
        <location evidence="8 9">Cytoplasm</location>
        <location evidence="8 9">Cytoskeleton</location>
        <location evidence="8 9">Microtubule organizing center</location>
        <location evidence="8 9">Centrosome</location>
        <location evidence="8 9">Centriole</location>
    </subcellularLocation>
    <text>Localizes to centrioles and procentrioles both in interphase and mitosis. Localizes to centriolar satellites, localization is dependent on PCM1 and dynein-mediated retrograde transport. Also localizes to the distal ends of the mother and daughter centrioles.</text>
</comment>
<comment type="alternative products">
    <event type="alternative splicing"/>
    <isoform>
        <id>Q4AC94-5</id>
        <name>5</name>
        <sequence type="displayed"/>
    </isoform>
    <isoform>
        <id>Q4AC94-1</id>
        <name>1</name>
        <sequence type="described" ref="VSP_034677 VSP_034678"/>
    </isoform>
    <isoform>
        <id>Q4AC94-2</id>
        <name>2</name>
        <sequence type="described" ref="VSP_029444 VSP_029445 VSP_029447"/>
    </isoform>
    <isoform>
        <id>Q4AC94-3</id>
        <name>3</name>
        <sequence type="described" ref="VSP_029448 VSP_034679"/>
    </isoform>
    <isoform>
        <id>Q4AC94-4</id>
        <name>4</name>
        <sequence type="described" ref="VSP_029446 VSP_034676"/>
    </isoform>
</comment>
<comment type="disease" evidence="9">
    <disease id="DI-04201">
        <name>Orofaciodigital syndrome 14</name>
        <acronym>OFD14</acronym>
        <description>A form of orofaciodigital syndrome, a group of heterogeneous disorders characterized by malformations of the oral cavity, face and digits, and associated phenotypic abnormalities that lead to the delineation of various subtypes. OFD14 patients show severe microcephaly, cerebral malformations the molar tooth sign, and intellectual disability in addition to canonical OFDS features.</description>
        <dbReference type="MIM" id="615948"/>
    </disease>
    <text>The disease is caused by variants affecting the gene represented in this entry.</text>
</comment>
<comment type="sequence caution" evidence="16">
    <conflict type="erroneous initiation">
        <sequence resource="EMBL-CDS" id="BAC03654"/>
    </conflict>
    <text>Truncated N-terminus.</text>
</comment>
<comment type="sequence caution" evidence="16">
    <conflict type="erroneous initiation">
        <sequence resource="EMBL-CDS" id="BAC86334"/>
    </conflict>
    <text>Truncated N-terminus.</text>
</comment>
<gene>
    <name type="primary">C2CD3</name>
</gene>
<proteinExistence type="evidence at protein level"/>
<protein>
    <recommendedName>
        <fullName>C2 domain-containing protein 3</fullName>
    </recommendedName>
</protein>
<organism>
    <name type="scientific">Homo sapiens</name>
    <name type="common">Human</name>
    <dbReference type="NCBI Taxonomy" id="9606"/>
    <lineage>
        <taxon>Eukaryota</taxon>
        <taxon>Metazoa</taxon>
        <taxon>Chordata</taxon>
        <taxon>Craniata</taxon>
        <taxon>Vertebrata</taxon>
        <taxon>Euteleostomi</taxon>
        <taxon>Mammalia</taxon>
        <taxon>Eutheria</taxon>
        <taxon>Euarchontoglires</taxon>
        <taxon>Primates</taxon>
        <taxon>Haplorrhini</taxon>
        <taxon>Catarrhini</taxon>
        <taxon>Hominidae</taxon>
        <taxon>Homo</taxon>
    </lineage>
</organism>